<accession>A6WHV0</accession>
<feature type="chain" id="PRO_1000051892" description="Small ribosomal subunit protein uS13">
    <location>
        <begin position="1"/>
        <end position="118"/>
    </location>
</feature>
<feature type="region of interest" description="Disordered" evidence="2">
    <location>
        <begin position="94"/>
        <end position="118"/>
    </location>
</feature>
<protein>
    <recommendedName>
        <fullName evidence="1">Small ribosomal subunit protein uS13</fullName>
    </recommendedName>
    <alternativeName>
        <fullName evidence="3">30S ribosomal protein S13</fullName>
    </alternativeName>
</protein>
<comment type="function">
    <text evidence="1">Located at the top of the head of the 30S subunit, it contacts several helices of the 16S rRNA. In the 70S ribosome it contacts the 23S rRNA (bridge B1a) and protein L5 of the 50S subunit (bridge B1b), connecting the 2 subunits; these bridges are implicated in subunit movement. Contacts the tRNAs in the A and P-sites.</text>
</comment>
<comment type="subunit">
    <text evidence="1">Part of the 30S ribosomal subunit. Forms a loose heterodimer with protein S19. Forms two bridges to the 50S subunit in the 70S ribosome.</text>
</comment>
<comment type="similarity">
    <text evidence="1">Belongs to the universal ribosomal protein uS13 family.</text>
</comment>
<dbReference type="EMBL" id="CP000753">
    <property type="protein sequence ID" value="ABS06389.1"/>
    <property type="molecule type" value="Genomic_DNA"/>
</dbReference>
<dbReference type="RefSeq" id="WP_006083578.1">
    <property type="nucleotide sequence ID" value="NC_009665.1"/>
</dbReference>
<dbReference type="SMR" id="A6WHV0"/>
<dbReference type="GeneID" id="11770577"/>
<dbReference type="KEGG" id="sbm:Shew185_0218"/>
<dbReference type="HOGENOM" id="CLU_103849_1_2_6"/>
<dbReference type="GO" id="GO:0005829">
    <property type="term" value="C:cytosol"/>
    <property type="evidence" value="ECO:0007669"/>
    <property type="project" value="TreeGrafter"/>
</dbReference>
<dbReference type="GO" id="GO:0015935">
    <property type="term" value="C:small ribosomal subunit"/>
    <property type="evidence" value="ECO:0007669"/>
    <property type="project" value="TreeGrafter"/>
</dbReference>
<dbReference type="GO" id="GO:0019843">
    <property type="term" value="F:rRNA binding"/>
    <property type="evidence" value="ECO:0007669"/>
    <property type="project" value="UniProtKB-UniRule"/>
</dbReference>
<dbReference type="GO" id="GO:0003735">
    <property type="term" value="F:structural constituent of ribosome"/>
    <property type="evidence" value="ECO:0007669"/>
    <property type="project" value="InterPro"/>
</dbReference>
<dbReference type="GO" id="GO:0000049">
    <property type="term" value="F:tRNA binding"/>
    <property type="evidence" value="ECO:0007669"/>
    <property type="project" value="UniProtKB-UniRule"/>
</dbReference>
<dbReference type="GO" id="GO:0006412">
    <property type="term" value="P:translation"/>
    <property type="evidence" value="ECO:0007669"/>
    <property type="project" value="UniProtKB-UniRule"/>
</dbReference>
<dbReference type="FunFam" id="1.10.8.50:FF:000001">
    <property type="entry name" value="30S ribosomal protein S13"/>
    <property type="match status" value="1"/>
</dbReference>
<dbReference type="FunFam" id="4.10.910.10:FF:000001">
    <property type="entry name" value="30S ribosomal protein S13"/>
    <property type="match status" value="1"/>
</dbReference>
<dbReference type="Gene3D" id="1.10.8.50">
    <property type="match status" value="1"/>
</dbReference>
<dbReference type="Gene3D" id="4.10.910.10">
    <property type="entry name" value="30s ribosomal protein s13, domain 2"/>
    <property type="match status" value="1"/>
</dbReference>
<dbReference type="HAMAP" id="MF_01315">
    <property type="entry name" value="Ribosomal_uS13"/>
    <property type="match status" value="1"/>
</dbReference>
<dbReference type="InterPro" id="IPR027437">
    <property type="entry name" value="Rbsml_uS13_C"/>
</dbReference>
<dbReference type="InterPro" id="IPR001892">
    <property type="entry name" value="Ribosomal_uS13"/>
</dbReference>
<dbReference type="InterPro" id="IPR010979">
    <property type="entry name" value="Ribosomal_uS13-like_H2TH"/>
</dbReference>
<dbReference type="InterPro" id="IPR019980">
    <property type="entry name" value="Ribosomal_uS13_bac-type"/>
</dbReference>
<dbReference type="InterPro" id="IPR018269">
    <property type="entry name" value="Ribosomal_uS13_CS"/>
</dbReference>
<dbReference type="NCBIfam" id="TIGR03631">
    <property type="entry name" value="uS13_bact"/>
    <property type="match status" value="1"/>
</dbReference>
<dbReference type="PANTHER" id="PTHR10871">
    <property type="entry name" value="30S RIBOSOMAL PROTEIN S13/40S RIBOSOMAL PROTEIN S18"/>
    <property type="match status" value="1"/>
</dbReference>
<dbReference type="PANTHER" id="PTHR10871:SF1">
    <property type="entry name" value="SMALL RIBOSOMAL SUBUNIT PROTEIN US13M"/>
    <property type="match status" value="1"/>
</dbReference>
<dbReference type="Pfam" id="PF00416">
    <property type="entry name" value="Ribosomal_S13"/>
    <property type="match status" value="1"/>
</dbReference>
<dbReference type="PIRSF" id="PIRSF002134">
    <property type="entry name" value="Ribosomal_S13"/>
    <property type="match status" value="1"/>
</dbReference>
<dbReference type="SUPFAM" id="SSF46946">
    <property type="entry name" value="S13-like H2TH domain"/>
    <property type="match status" value="1"/>
</dbReference>
<dbReference type="PROSITE" id="PS00646">
    <property type="entry name" value="RIBOSOMAL_S13_1"/>
    <property type="match status" value="1"/>
</dbReference>
<dbReference type="PROSITE" id="PS50159">
    <property type="entry name" value="RIBOSOMAL_S13_2"/>
    <property type="match status" value="1"/>
</dbReference>
<proteinExistence type="inferred from homology"/>
<name>RS13_SHEB8</name>
<keyword id="KW-0687">Ribonucleoprotein</keyword>
<keyword id="KW-0689">Ribosomal protein</keyword>
<keyword id="KW-0694">RNA-binding</keyword>
<keyword id="KW-0699">rRNA-binding</keyword>
<keyword id="KW-0820">tRNA-binding</keyword>
<evidence type="ECO:0000255" key="1">
    <source>
        <dbReference type="HAMAP-Rule" id="MF_01315"/>
    </source>
</evidence>
<evidence type="ECO:0000256" key="2">
    <source>
        <dbReference type="SAM" id="MobiDB-lite"/>
    </source>
</evidence>
<evidence type="ECO:0000305" key="3"/>
<gene>
    <name evidence="1" type="primary">rpsM</name>
    <name type="ordered locus">Shew185_0218</name>
</gene>
<sequence length="118" mass="13345">MARIAGINIPDQKHTVIALTAIFGIGRTRARAICAATAIAETAKIKELSEAQIDILREEVAKYIVEGDLRREISMNIKRLMDLGCYRGLRHRRSLPLRGQRTKTNARTRKGPRKPIRK</sequence>
<reference key="1">
    <citation type="submission" date="2007-07" db="EMBL/GenBank/DDBJ databases">
        <title>Complete sequence of chromosome of Shewanella baltica OS185.</title>
        <authorList>
            <consortium name="US DOE Joint Genome Institute"/>
            <person name="Copeland A."/>
            <person name="Lucas S."/>
            <person name="Lapidus A."/>
            <person name="Barry K."/>
            <person name="Glavina del Rio T."/>
            <person name="Dalin E."/>
            <person name="Tice H."/>
            <person name="Pitluck S."/>
            <person name="Sims D."/>
            <person name="Brettin T."/>
            <person name="Bruce D."/>
            <person name="Detter J.C."/>
            <person name="Han C."/>
            <person name="Schmutz J."/>
            <person name="Larimer F."/>
            <person name="Land M."/>
            <person name="Hauser L."/>
            <person name="Kyrpides N."/>
            <person name="Mikhailova N."/>
            <person name="Brettar I."/>
            <person name="Rodrigues J."/>
            <person name="Konstantinidis K."/>
            <person name="Tiedje J."/>
            <person name="Richardson P."/>
        </authorList>
    </citation>
    <scope>NUCLEOTIDE SEQUENCE [LARGE SCALE GENOMIC DNA]</scope>
    <source>
        <strain>OS185</strain>
    </source>
</reference>
<organism>
    <name type="scientific">Shewanella baltica (strain OS185)</name>
    <dbReference type="NCBI Taxonomy" id="402882"/>
    <lineage>
        <taxon>Bacteria</taxon>
        <taxon>Pseudomonadati</taxon>
        <taxon>Pseudomonadota</taxon>
        <taxon>Gammaproteobacteria</taxon>
        <taxon>Alteromonadales</taxon>
        <taxon>Shewanellaceae</taxon>
        <taxon>Shewanella</taxon>
    </lineage>
</organism>